<dbReference type="EC" id="3.6.1.23" evidence="1"/>
<dbReference type="EMBL" id="CP000655">
    <property type="protein sequence ID" value="ABP34956.1"/>
    <property type="molecule type" value="Genomic_DNA"/>
</dbReference>
<dbReference type="RefSeq" id="WP_011903579.1">
    <property type="nucleotide sequence ID" value="NC_009379.1"/>
</dbReference>
<dbReference type="SMR" id="A4SZP2"/>
<dbReference type="GeneID" id="31482132"/>
<dbReference type="KEGG" id="pnu:Pnuc_1743"/>
<dbReference type="eggNOG" id="COG0756">
    <property type="taxonomic scope" value="Bacteria"/>
</dbReference>
<dbReference type="HOGENOM" id="CLU_068508_1_1_4"/>
<dbReference type="UniPathway" id="UPA00610">
    <property type="reaction ID" value="UER00666"/>
</dbReference>
<dbReference type="Proteomes" id="UP000000231">
    <property type="component" value="Chromosome"/>
</dbReference>
<dbReference type="GO" id="GO:0004170">
    <property type="term" value="F:dUTP diphosphatase activity"/>
    <property type="evidence" value="ECO:0007669"/>
    <property type="project" value="UniProtKB-UniRule"/>
</dbReference>
<dbReference type="GO" id="GO:0000287">
    <property type="term" value="F:magnesium ion binding"/>
    <property type="evidence" value="ECO:0007669"/>
    <property type="project" value="UniProtKB-UniRule"/>
</dbReference>
<dbReference type="GO" id="GO:0006226">
    <property type="term" value="P:dUMP biosynthetic process"/>
    <property type="evidence" value="ECO:0007669"/>
    <property type="project" value="UniProtKB-UniRule"/>
</dbReference>
<dbReference type="GO" id="GO:0046081">
    <property type="term" value="P:dUTP catabolic process"/>
    <property type="evidence" value="ECO:0007669"/>
    <property type="project" value="InterPro"/>
</dbReference>
<dbReference type="CDD" id="cd07557">
    <property type="entry name" value="trimeric_dUTPase"/>
    <property type="match status" value="1"/>
</dbReference>
<dbReference type="FunFam" id="2.70.40.10:FF:000002">
    <property type="entry name" value="dUTP diphosphatase"/>
    <property type="match status" value="1"/>
</dbReference>
<dbReference type="Gene3D" id="2.70.40.10">
    <property type="match status" value="1"/>
</dbReference>
<dbReference type="HAMAP" id="MF_00116">
    <property type="entry name" value="dUTPase_bact"/>
    <property type="match status" value="1"/>
</dbReference>
<dbReference type="InterPro" id="IPR008181">
    <property type="entry name" value="dUTPase"/>
</dbReference>
<dbReference type="InterPro" id="IPR029054">
    <property type="entry name" value="dUTPase-like"/>
</dbReference>
<dbReference type="InterPro" id="IPR036157">
    <property type="entry name" value="dUTPase-like_sf"/>
</dbReference>
<dbReference type="InterPro" id="IPR033704">
    <property type="entry name" value="dUTPase_trimeric"/>
</dbReference>
<dbReference type="NCBIfam" id="TIGR00576">
    <property type="entry name" value="dut"/>
    <property type="match status" value="1"/>
</dbReference>
<dbReference type="NCBIfam" id="NF001862">
    <property type="entry name" value="PRK00601.1"/>
    <property type="match status" value="1"/>
</dbReference>
<dbReference type="PANTHER" id="PTHR11241">
    <property type="entry name" value="DEOXYURIDINE 5'-TRIPHOSPHATE NUCLEOTIDOHYDROLASE"/>
    <property type="match status" value="1"/>
</dbReference>
<dbReference type="PANTHER" id="PTHR11241:SF0">
    <property type="entry name" value="DEOXYURIDINE 5'-TRIPHOSPHATE NUCLEOTIDOHYDROLASE"/>
    <property type="match status" value="1"/>
</dbReference>
<dbReference type="Pfam" id="PF00692">
    <property type="entry name" value="dUTPase"/>
    <property type="match status" value="1"/>
</dbReference>
<dbReference type="SUPFAM" id="SSF51283">
    <property type="entry name" value="dUTPase-like"/>
    <property type="match status" value="1"/>
</dbReference>
<protein>
    <recommendedName>
        <fullName evidence="1">Deoxyuridine 5'-triphosphate nucleotidohydrolase</fullName>
        <shortName evidence="1">dUTPase</shortName>
        <ecNumber evidence="1">3.6.1.23</ecNumber>
    </recommendedName>
    <alternativeName>
        <fullName evidence="1">dUTP pyrophosphatase</fullName>
    </alternativeName>
</protein>
<accession>A4SZP2</accession>
<evidence type="ECO:0000255" key="1">
    <source>
        <dbReference type="HAMAP-Rule" id="MF_00116"/>
    </source>
</evidence>
<proteinExistence type="inferred from homology"/>
<reference key="1">
    <citation type="journal article" date="2012" name="Stand. Genomic Sci.">
        <title>Complete genome sequence of Polynucleobacter necessarius subsp. asymbioticus type strain (QLW-P1DMWA-1(T)).</title>
        <authorList>
            <person name="Meincke L."/>
            <person name="Copeland A."/>
            <person name="Lapidus A."/>
            <person name="Lucas S."/>
            <person name="Berry K.W."/>
            <person name="Del Rio T.G."/>
            <person name="Hammon N."/>
            <person name="Dalin E."/>
            <person name="Tice H."/>
            <person name="Pitluck S."/>
            <person name="Richardson P."/>
            <person name="Bruce D."/>
            <person name="Goodwin L."/>
            <person name="Han C."/>
            <person name="Tapia R."/>
            <person name="Detter J.C."/>
            <person name="Schmutz J."/>
            <person name="Brettin T."/>
            <person name="Larimer F."/>
            <person name="Land M."/>
            <person name="Hauser L."/>
            <person name="Kyrpides N.C."/>
            <person name="Ivanova N."/>
            <person name="Goker M."/>
            <person name="Woyke T."/>
            <person name="Wu Q.L."/>
            <person name="Pockl M."/>
            <person name="Hahn M.W."/>
            <person name="Klenk H.P."/>
        </authorList>
    </citation>
    <scope>NUCLEOTIDE SEQUENCE [LARGE SCALE GENOMIC DNA]</scope>
    <source>
        <strain>DSM 18221 / CIP 109841 / QLW-P1DMWA-1</strain>
    </source>
</reference>
<keyword id="KW-0378">Hydrolase</keyword>
<keyword id="KW-0460">Magnesium</keyword>
<keyword id="KW-0479">Metal-binding</keyword>
<keyword id="KW-0546">Nucleotide metabolism</keyword>
<keyword id="KW-1185">Reference proteome</keyword>
<feature type="chain" id="PRO_1000076064" description="Deoxyuridine 5'-triphosphate nucleotidohydrolase">
    <location>
        <begin position="1"/>
        <end position="149"/>
    </location>
</feature>
<feature type="binding site" evidence="1">
    <location>
        <begin position="68"/>
        <end position="70"/>
    </location>
    <ligand>
        <name>substrate</name>
    </ligand>
</feature>
<feature type="binding site" evidence="1">
    <location>
        <position position="81"/>
    </location>
    <ligand>
        <name>substrate</name>
    </ligand>
</feature>
<feature type="binding site" evidence="1">
    <location>
        <begin position="85"/>
        <end position="87"/>
    </location>
    <ligand>
        <name>substrate</name>
    </ligand>
</feature>
<feature type="binding site" evidence="1">
    <location>
        <position position="95"/>
    </location>
    <ligand>
        <name>substrate</name>
    </ligand>
</feature>
<name>DUT_POLAQ</name>
<gene>
    <name evidence="1" type="primary">dut</name>
    <name type="ordered locus">Pnuc_1743</name>
</gene>
<comment type="function">
    <text evidence="1">This enzyme is involved in nucleotide metabolism: it produces dUMP, the immediate precursor of thymidine nucleotides and it decreases the intracellular concentration of dUTP so that uracil cannot be incorporated into DNA.</text>
</comment>
<comment type="catalytic activity">
    <reaction evidence="1">
        <text>dUTP + H2O = dUMP + diphosphate + H(+)</text>
        <dbReference type="Rhea" id="RHEA:10248"/>
        <dbReference type="ChEBI" id="CHEBI:15377"/>
        <dbReference type="ChEBI" id="CHEBI:15378"/>
        <dbReference type="ChEBI" id="CHEBI:33019"/>
        <dbReference type="ChEBI" id="CHEBI:61555"/>
        <dbReference type="ChEBI" id="CHEBI:246422"/>
        <dbReference type="EC" id="3.6.1.23"/>
    </reaction>
</comment>
<comment type="cofactor">
    <cofactor evidence="1">
        <name>Mg(2+)</name>
        <dbReference type="ChEBI" id="CHEBI:18420"/>
    </cofactor>
</comment>
<comment type="pathway">
    <text evidence="1">Pyrimidine metabolism; dUMP biosynthesis; dUMP from dCTP (dUTP route): step 2/2.</text>
</comment>
<comment type="similarity">
    <text evidence="1">Belongs to the dUTPase family.</text>
</comment>
<sequence>MQSLQVKILDERMRDQLPSYGTPGSAGLDLRACIDEAIEIVPGQTVLVPTGLAIYVEDPRYAAFILPRSGLGHKHGIVLGNLVGLIDSDYQGQLMVSTWNRGSNPFKLEPMERLAQLVVMPIQQVELKVVEEFTESSRGAGGFGSTGRT</sequence>
<organism>
    <name type="scientific">Polynucleobacter asymbioticus (strain DSM 18221 / CIP 109841 / QLW-P1DMWA-1)</name>
    <name type="common">Polynucleobacter necessarius subsp. asymbioticus</name>
    <dbReference type="NCBI Taxonomy" id="312153"/>
    <lineage>
        <taxon>Bacteria</taxon>
        <taxon>Pseudomonadati</taxon>
        <taxon>Pseudomonadota</taxon>
        <taxon>Betaproteobacteria</taxon>
        <taxon>Burkholderiales</taxon>
        <taxon>Burkholderiaceae</taxon>
        <taxon>Polynucleobacter</taxon>
    </lineage>
</organism>